<gene>
    <name evidence="1" type="primary">rplX</name>
    <name type="ordered locus">BQ2027_MB0736</name>
</gene>
<keyword id="KW-1185">Reference proteome</keyword>
<keyword id="KW-0687">Ribonucleoprotein</keyword>
<keyword id="KW-0689">Ribosomal protein</keyword>
<keyword id="KW-0694">RNA-binding</keyword>
<keyword id="KW-0699">rRNA-binding</keyword>
<accession>P60628</accession>
<accession>A0A1R3XWL3</accession>
<accession>P95063</accession>
<accession>X2BFX8</accession>
<evidence type="ECO:0000255" key="1">
    <source>
        <dbReference type="HAMAP-Rule" id="MF_01326"/>
    </source>
</evidence>
<evidence type="ECO:0000305" key="2"/>
<name>RL24_MYCBO</name>
<proteinExistence type="inferred from homology"/>
<dbReference type="EMBL" id="LT708304">
    <property type="protein sequence ID" value="SIT99335.1"/>
    <property type="molecule type" value="Genomic_DNA"/>
</dbReference>
<dbReference type="RefSeq" id="NP_854394.1">
    <property type="nucleotide sequence ID" value="NC_002945.3"/>
</dbReference>
<dbReference type="RefSeq" id="WP_003403654.1">
    <property type="nucleotide sequence ID" value="NC_002945.4"/>
</dbReference>
<dbReference type="SMR" id="P60628"/>
<dbReference type="GeneID" id="45424680"/>
<dbReference type="KEGG" id="mbo:BQ2027_MB0736"/>
<dbReference type="PATRIC" id="fig|233413.5.peg.803"/>
<dbReference type="Proteomes" id="UP000001419">
    <property type="component" value="Chromosome"/>
</dbReference>
<dbReference type="GO" id="GO:1990904">
    <property type="term" value="C:ribonucleoprotein complex"/>
    <property type="evidence" value="ECO:0007669"/>
    <property type="project" value="UniProtKB-KW"/>
</dbReference>
<dbReference type="GO" id="GO:0005840">
    <property type="term" value="C:ribosome"/>
    <property type="evidence" value="ECO:0007669"/>
    <property type="project" value="UniProtKB-KW"/>
</dbReference>
<dbReference type="GO" id="GO:0019843">
    <property type="term" value="F:rRNA binding"/>
    <property type="evidence" value="ECO:0007669"/>
    <property type="project" value="UniProtKB-UniRule"/>
</dbReference>
<dbReference type="GO" id="GO:0003735">
    <property type="term" value="F:structural constituent of ribosome"/>
    <property type="evidence" value="ECO:0007669"/>
    <property type="project" value="InterPro"/>
</dbReference>
<dbReference type="GO" id="GO:0006412">
    <property type="term" value="P:translation"/>
    <property type="evidence" value="ECO:0007669"/>
    <property type="project" value="UniProtKB-UniRule"/>
</dbReference>
<dbReference type="CDD" id="cd06089">
    <property type="entry name" value="KOW_RPL26"/>
    <property type="match status" value="1"/>
</dbReference>
<dbReference type="FunFam" id="2.30.30.30:FF:000004">
    <property type="entry name" value="50S ribosomal protein L24"/>
    <property type="match status" value="1"/>
</dbReference>
<dbReference type="Gene3D" id="2.30.30.30">
    <property type="match status" value="1"/>
</dbReference>
<dbReference type="HAMAP" id="MF_01326_B">
    <property type="entry name" value="Ribosomal_uL24_B"/>
    <property type="match status" value="1"/>
</dbReference>
<dbReference type="InterPro" id="IPR005824">
    <property type="entry name" value="KOW"/>
</dbReference>
<dbReference type="InterPro" id="IPR014722">
    <property type="entry name" value="Rib_uL2_dom2"/>
</dbReference>
<dbReference type="InterPro" id="IPR003256">
    <property type="entry name" value="Ribosomal_uL24"/>
</dbReference>
<dbReference type="InterPro" id="IPR005825">
    <property type="entry name" value="Ribosomal_uL24_CS"/>
</dbReference>
<dbReference type="InterPro" id="IPR041988">
    <property type="entry name" value="Ribosomal_uL24_KOW"/>
</dbReference>
<dbReference type="InterPro" id="IPR008991">
    <property type="entry name" value="Translation_prot_SH3-like_sf"/>
</dbReference>
<dbReference type="NCBIfam" id="TIGR01079">
    <property type="entry name" value="rplX_bact"/>
    <property type="match status" value="1"/>
</dbReference>
<dbReference type="PANTHER" id="PTHR12903">
    <property type="entry name" value="MITOCHONDRIAL RIBOSOMAL PROTEIN L24"/>
    <property type="match status" value="1"/>
</dbReference>
<dbReference type="Pfam" id="PF00467">
    <property type="entry name" value="KOW"/>
    <property type="match status" value="1"/>
</dbReference>
<dbReference type="Pfam" id="PF17136">
    <property type="entry name" value="ribosomal_L24"/>
    <property type="match status" value="1"/>
</dbReference>
<dbReference type="SMART" id="SM00739">
    <property type="entry name" value="KOW"/>
    <property type="match status" value="1"/>
</dbReference>
<dbReference type="SUPFAM" id="SSF50104">
    <property type="entry name" value="Translation proteins SH3-like domain"/>
    <property type="match status" value="1"/>
</dbReference>
<dbReference type="PROSITE" id="PS01108">
    <property type="entry name" value="RIBOSOMAL_L24"/>
    <property type="match status" value="1"/>
</dbReference>
<sequence>MKVHKGDTVLVISGKDKGAKGKVLQAYPDRNRVLVEGVNRIKKHTAISTTQRGARSGGIVTQEAPIHVSNVMVVDSDGKPTRIGYRVDEETGKRVRISKRNGKDI</sequence>
<protein>
    <recommendedName>
        <fullName evidence="1">Large ribosomal subunit protein uL24</fullName>
    </recommendedName>
    <alternativeName>
        <fullName evidence="2">50S ribosomal protein L24</fullName>
    </alternativeName>
</protein>
<organism>
    <name type="scientific">Mycobacterium bovis (strain ATCC BAA-935 / AF2122/97)</name>
    <dbReference type="NCBI Taxonomy" id="233413"/>
    <lineage>
        <taxon>Bacteria</taxon>
        <taxon>Bacillati</taxon>
        <taxon>Actinomycetota</taxon>
        <taxon>Actinomycetes</taxon>
        <taxon>Mycobacteriales</taxon>
        <taxon>Mycobacteriaceae</taxon>
        <taxon>Mycobacterium</taxon>
        <taxon>Mycobacterium tuberculosis complex</taxon>
    </lineage>
</organism>
<reference key="1">
    <citation type="journal article" date="2003" name="Proc. Natl. Acad. Sci. U.S.A.">
        <title>The complete genome sequence of Mycobacterium bovis.</title>
        <authorList>
            <person name="Garnier T."/>
            <person name="Eiglmeier K."/>
            <person name="Camus J.-C."/>
            <person name="Medina N."/>
            <person name="Mansoor H."/>
            <person name="Pryor M."/>
            <person name="Duthoy S."/>
            <person name="Grondin S."/>
            <person name="Lacroix C."/>
            <person name="Monsempe C."/>
            <person name="Simon S."/>
            <person name="Harris B."/>
            <person name="Atkin R."/>
            <person name="Doggett J."/>
            <person name="Mayes R."/>
            <person name="Keating L."/>
            <person name="Wheeler P.R."/>
            <person name="Parkhill J."/>
            <person name="Barrell B.G."/>
            <person name="Cole S.T."/>
            <person name="Gordon S.V."/>
            <person name="Hewinson R.G."/>
        </authorList>
    </citation>
    <scope>NUCLEOTIDE SEQUENCE [LARGE SCALE GENOMIC DNA]</scope>
    <source>
        <strain>ATCC BAA-935 / AF2122/97</strain>
    </source>
</reference>
<reference key="2">
    <citation type="journal article" date="2017" name="Genome Announc.">
        <title>Updated reference genome sequence and annotation of Mycobacterium bovis AF2122/97.</title>
        <authorList>
            <person name="Malone K.M."/>
            <person name="Farrell D."/>
            <person name="Stuber T.P."/>
            <person name="Schubert O.T."/>
            <person name="Aebersold R."/>
            <person name="Robbe-Austerman S."/>
            <person name="Gordon S.V."/>
        </authorList>
    </citation>
    <scope>NUCLEOTIDE SEQUENCE [LARGE SCALE GENOMIC DNA]</scope>
    <scope>GENOME REANNOTATION</scope>
    <source>
        <strain>ATCC BAA-935 / AF2122/97</strain>
    </source>
</reference>
<feature type="chain" id="PRO_0000130675" description="Large ribosomal subunit protein uL24">
    <location>
        <begin position="1"/>
        <end position="105"/>
    </location>
</feature>
<comment type="function">
    <text evidence="1">One of two assembly initiator proteins, it binds directly to the 5'-end of the 23S rRNA, where it nucleates assembly of the 50S subunit.</text>
</comment>
<comment type="function">
    <text evidence="1">One of the proteins that surrounds the polypeptide exit tunnel on the outside of the subunit.</text>
</comment>
<comment type="subunit">
    <text evidence="1">Part of the 50S ribosomal subunit.</text>
</comment>
<comment type="similarity">
    <text evidence="1">Belongs to the universal ribosomal protein uL24 family.</text>
</comment>